<gene>
    <name evidence="1" type="primary">EIF2AK3</name>
    <name evidence="7" type="synonym">PERK</name>
</gene>
<sequence>MERATGPGSLARTLLLPLLLGLVAGTVTARRTSDLLAPTAEAAFGLGAAAAPTSATRVPATGAVIAAEVTVEDSEALPAAAGEQEAREPEPEPEEEPDIRPCGRSLVIISTLDGRIAALDPENHGKKQWDLDVGSGSLVSSSLSKPEVFGNKMIIPSLDGDLFQWDRDRESMETVPFTVESLLESSYKFGDDVVLVGGKSLTTYGLSAYSGKVRYICSALGCRQWDNDEMEQEEDILLLQRTQKTVRAVGPRSGNEKWNFSVGHFELRYIPDMETRAGFIESTLKPSGNKEQSKIISDVEEQEAVMMDTVIKVSVADWKVMAFNKKGGHLEWEYQFCTPIASAWLVKDGKVIPISLFDDTSYAPNDGVLEDEEDIVEAARGATENSVYLGMYRGQLYLQSSVRISEKFPTSPKALESVSSENAIIPLPTIKWKPLIHSPSRTPVLVGSDEFDKCLSNDKFSHEEYSNGALSILQYPYDNGYYLPYYKRERNKRSTQITVRFLDNPNYKNIRKKDPVLLLHWWKEIVGTIVFCIVATTFIVRRLFHPHPHRQRKESETQCQTENKYDAVSGEANDSSWNDIKNSGYVSRYLTDFEPIQCMGRGGFGVVFEARNKVDDCNYAIKRIRLPNRELAREKVMREVKALAKLEHPGIVRYFNAWLEAPPEKWQEKMDEIWLKDDSTDWPLSSPSPVDAPSVKIRRMDPFSTKECIEIIAPSPHSSRSFSVGISCSQTSSSESQFSPLEFSGMDHGNVSKSADAVCQLQDSCLTDCEGEDGTMDGNDEGHSFELCPSEASPYIRSRERTSSSIVFEDSGCDNASSKEEPRMNQPPVGNHYANKLSALRHSGSKSSEPTVSVSPSRPTTLSLDLTKSSVGKLQPSSPKVYLYIQMQLCRKENLKDWLNSRCTIEARERSVCLHIFLQIAEAVEFLHSKGLMHRDLKPSNIFFTMDDVVKVGDFGLVTAMDQDEEDQMVLTPMPGYARHTGQVGTKLYMSPEQIHGNSYSHKVDIFSLGLILFELLYPFGTQMERVRILTDVRDLKFPPLFAQKYPREYAMVQDMLSPSPTERPEAASIIENAIFEDLEFPEKTLLRQRSRSMSSPGAKHSRHSSSPHSPLPSN</sequence>
<name>E2AK3_BOVIN</name>
<evidence type="ECO:0000250" key="1">
    <source>
        <dbReference type="UniProtKB" id="Q9NZJ5"/>
    </source>
</evidence>
<evidence type="ECO:0000250" key="2">
    <source>
        <dbReference type="UniProtKB" id="Q9Z2B5"/>
    </source>
</evidence>
<evidence type="ECO:0000255" key="3"/>
<evidence type="ECO:0000255" key="4">
    <source>
        <dbReference type="PROSITE-ProRule" id="PRU00159"/>
    </source>
</evidence>
<evidence type="ECO:0000256" key="5">
    <source>
        <dbReference type="SAM" id="MobiDB-lite"/>
    </source>
</evidence>
<evidence type="ECO:0000269" key="6">
    <source>
    </source>
</evidence>
<evidence type="ECO:0000303" key="7">
    <source>
    </source>
</evidence>
<evidence type="ECO:0000305" key="8"/>
<evidence type="ECO:0007744" key="9">
    <source>
        <dbReference type="PDB" id="5V1D"/>
    </source>
</evidence>
<evidence type="ECO:0007829" key="10">
    <source>
        <dbReference type="PDB" id="5V1D"/>
    </source>
</evidence>
<organism>
    <name type="scientific">Bos taurus</name>
    <name type="common">Bovine</name>
    <dbReference type="NCBI Taxonomy" id="9913"/>
    <lineage>
        <taxon>Eukaryota</taxon>
        <taxon>Metazoa</taxon>
        <taxon>Chordata</taxon>
        <taxon>Craniata</taxon>
        <taxon>Vertebrata</taxon>
        <taxon>Euteleostomi</taxon>
        <taxon>Mammalia</taxon>
        <taxon>Eutheria</taxon>
        <taxon>Laurasiatheria</taxon>
        <taxon>Artiodactyla</taxon>
        <taxon>Ruminantia</taxon>
        <taxon>Pecora</taxon>
        <taxon>Bovidae</taxon>
        <taxon>Bovinae</taxon>
        <taxon>Bos</taxon>
    </lineage>
</organism>
<accession>A5D791</accession>
<accession>F1MCN0</accession>
<dbReference type="EC" id="2.7.11.1" evidence="1"/>
<dbReference type="EC" id="2.7.10.2" evidence="2"/>
<dbReference type="EMBL" id="BC140471">
    <property type="protein sequence ID" value="AAI40472.1"/>
    <property type="molecule type" value="mRNA"/>
</dbReference>
<dbReference type="RefSeq" id="NP_001091555.1">
    <property type="nucleotide sequence ID" value="NM_001098086.2"/>
</dbReference>
<dbReference type="PDB" id="5V1D">
    <property type="method" value="X-ray"/>
    <property type="resolution" value="2.80 A"/>
    <property type="chains" value="A/B/C/D=96-421"/>
</dbReference>
<dbReference type="PDBsum" id="5V1D"/>
<dbReference type="SMR" id="A5D791"/>
<dbReference type="FunCoup" id="A5D791">
    <property type="interactions" value="2600"/>
</dbReference>
<dbReference type="STRING" id="9913.ENSBTAP00000000210"/>
<dbReference type="PaxDb" id="9913-ENSBTAP00000000210"/>
<dbReference type="DNASU" id="535820"/>
<dbReference type="Ensembl" id="ENSBTAT00000000210.6">
    <property type="protein sequence ID" value="ENSBTAP00000000210.5"/>
    <property type="gene ID" value="ENSBTAG00000000184.7"/>
</dbReference>
<dbReference type="GeneID" id="535820"/>
<dbReference type="KEGG" id="bta:535820"/>
<dbReference type="CTD" id="9451"/>
<dbReference type="VEuPathDB" id="HostDB:ENSBTAG00000000184"/>
<dbReference type="VGNC" id="VGNC:28382">
    <property type="gene designation" value="EIF2AK3"/>
</dbReference>
<dbReference type="eggNOG" id="KOG1033">
    <property type="taxonomic scope" value="Eukaryota"/>
</dbReference>
<dbReference type="GeneTree" id="ENSGT00940000158121"/>
<dbReference type="HOGENOM" id="CLU_009091_0_0_1"/>
<dbReference type="OMA" id="CMIEERE"/>
<dbReference type="OrthoDB" id="341578at2759"/>
<dbReference type="TreeFam" id="TF101511"/>
<dbReference type="Reactome" id="R-BTA-381042">
    <property type="pathway name" value="PERK regulates gene expression"/>
</dbReference>
<dbReference type="Reactome" id="R-BTA-9909505">
    <property type="pathway name" value="Modulation of host responses by IFN-stimulated genes"/>
</dbReference>
<dbReference type="Proteomes" id="UP000009136">
    <property type="component" value="Chromosome 11"/>
</dbReference>
<dbReference type="Bgee" id="ENSBTAG00000000184">
    <property type="expression patterns" value="Expressed in saliva-secreting gland and 108 other cell types or tissues"/>
</dbReference>
<dbReference type="GO" id="GO:0005737">
    <property type="term" value="C:cytoplasm"/>
    <property type="evidence" value="ECO:0000318"/>
    <property type="project" value="GO_Central"/>
</dbReference>
<dbReference type="GO" id="GO:0005789">
    <property type="term" value="C:endoplasmic reticulum membrane"/>
    <property type="evidence" value="ECO:0007669"/>
    <property type="project" value="UniProtKB-SubCell"/>
</dbReference>
<dbReference type="GO" id="GO:0044233">
    <property type="term" value="C:mitochondria-associated endoplasmic reticulum membrane contact site"/>
    <property type="evidence" value="ECO:0007669"/>
    <property type="project" value="Ensembl"/>
</dbReference>
<dbReference type="GO" id="GO:0005634">
    <property type="term" value="C:nucleus"/>
    <property type="evidence" value="ECO:0000318"/>
    <property type="project" value="GO_Central"/>
</dbReference>
<dbReference type="GO" id="GO:0005524">
    <property type="term" value="F:ATP binding"/>
    <property type="evidence" value="ECO:0007669"/>
    <property type="project" value="UniProtKB-KW"/>
</dbReference>
<dbReference type="GO" id="GO:0004694">
    <property type="term" value="F:eukaryotic translation initiation factor 2alpha kinase activity"/>
    <property type="evidence" value="ECO:0000250"/>
    <property type="project" value="UniProtKB"/>
</dbReference>
<dbReference type="GO" id="GO:0042802">
    <property type="term" value="F:identical protein binding"/>
    <property type="evidence" value="ECO:0007669"/>
    <property type="project" value="Ensembl"/>
</dbReference>
<dbReference type="GO" id="GO:0051787">
    <property type="term" value="F:misfolded protein binding"/>
    <property type="evidence" value="ECO:0000314"/>
    <property type="project" value="UniProtKB"/>
</dbReference>
<dbReference type="GO" id="GO:0019903">
    <property type="term" value="F:protein phosphatase binding"/>
    <property type="evidence" value="ECO:0007669"/>
    <property type="project" value="Ensembl"/>
</dbReference>
<dbReference type="GO" id="GO:0004713">
    <property type="term" value="F:protein tyrosine kinase activity"/>
    <property type="evidence" value="ECO:0000250"/>
    <property type="project" value="UniProtKB"/>
</dbReference>
<dbReference type="GO" id="GO:0001525">
    <property type="term" value="P:angiogenesis"/>
    <property type="evidence" value="ECO:0007669"/>
    <property type="project" value="Ensembl"/>
</dbReference>
<dbReference type="GO" id="GO:0034198">
    <property type="term" value="P:cellular response to amino acid starvation"/>
    <property type="evidence" value="ECO:0007669"/>
    <property type="project" value="Ensembl"/>
</dbReference>
<dbReference type="GO" id="GO:0070417">
    <property type="term" value="P:cellular response to cold"/>
    <property type="evidence" value="ECO:0007669"/>
    <property type="project" value="Ensembl"/>
</dbReference>
<dbReference type="GO" id="GO:0042149">
    <property type="term" value="P:cellular response to glucose starvation"/>
    <property type="evidence" value="ECO:0007669"/>
    <property type="project" value="Ensembl"/>
</dbReference>
<dbReference type="GO" id="GO:0031018">
    <property type="term" value="P:endocrine pancreas development"/>
    <property type="evidence" value="ECO:0000250"/>
    <property type="project" value="UniProtKB"/>
</dbReference>
<dbReference type="GO" id="GO:0030968">
    <property type="term" value="P:endoplasmic reticulum unfolded protein response"/>
    <property type="evidence" value="ECO:0000250"/>
    <property type="project" value="UniProtKB"/>
</dbReference>
<dbReference type="GO" id="GO:0006983">
    <property type="term" value="P:ER overload response"/>
    <property type="evidence" value="ECO:0000250"/>
    <property type="project" value="UniProtKB"/>
</dbReference>
<dbReference type="GO" id="GO:0017148">
    <property type="term" value="P:negative regulation of translation"/>
    <property type="evidence" value="ECO:0000318"/>
    <property type="project" value="GO_Central"/>
</dbReference>
<dbReference type="GO" id="GO:0001503">
    <property type="term" value="P:ossification"/>
    <property type="evidence" value="ECO:0000250"/>
    <property type="project" value="UniProtKB"/>
</dbReference>
<dbReference type="GO" id="GO:0036499">
    <property type="term" value="P:PERK-mediated unfolded protein response"/>
    <property type="evidence" value="ECO:0007669"/>
    <property type="project" value="Ensembl"/>
</dbReference>
<dbReference type="GO" id="GO:0045943">
    <property type="term" value="P:positive regulation of transcription by RNA polymerase I"/>
    <property type="evidence" value="ECO:0007669"/>
    <property type="project" value="Ensembl"/>
</dbReference>
<dbReference type="GO" id="GO:0010575">
    <property type="term" value="P:positive regulation of vascular endothelial growth factor production"/>
    <property type="evidence" value="ECO:0007669"/>
    <property type="project" value="Ensembl"/>
</dbReference>
<dbReference type="GO" id="GO:1902235">
    <property type="term" value="P:regulation of endoplasmic reticulum stress-induced intrinsic apoptotic signaling pathway"/>
    <property type="evidence" value="ECO:0007669"/>
    <property type="project" value="Ensembl"/>
</dbReference>
<dbReference type="GO" id="GO:0006446">
    <property type="term" value="P:regulation of translational initiation"/>
    <property type="evidence" value="ECO:0000318"/>
    <property type="project" value="GO_Central"/>
</dbReference>
<dbReference type="CDD" id="cd09768">
    <property type="entry name" value="Luminal_EIF2AK3"/>
    <property type="match status" value="1"/>
</dbReference>
<dbReference type="CDD" id="cd14048">
    <property type="entry name" value="STKc_EIF2AK3_PERK"/>
    <property type="match status" value="1"/>
</dbReference>
<dbReference type="FunFam" id="2.130.10.10:FF:000622">
    <property type="entry name" value="Eukaryotic translation initiation factor 2-alpha kinase 3"/>
    <property type="match status" value="1"/>
</dbReference>
<dbReference type="FunFam" id="3.30.200.20:FF:000193">
    <property type="entry name" value="Eukaryotic translation initiation factor 2-alpha kinase 3"/>
    <property type="match status" value="1"/>
</dbReference>
<dbReference type="FunFam" id="1.10.510.10:FF:000251">
    <property type="entry name" value="eukaryotic translation initiation factor 2-alpha kinase 3"/>
    <property type="match status" value="1"/>
</dbReference>
<dbReference type="Gene3D" id="3.30.200.20">
    <property type="entry name" value="Phosphorylase Kinase, domain 1"/>
    <property type="match status" value="1"/>
</dbReference>
<dbReference type="Gene3D" id="1.10.510.10">
    <property type="entry name" value="Transferase(Phosphotransferase) domain 1"/>
    <property type="match status" value="1"/>
</dbReference>
<dbReference type="Gene3D" id="2.130.10.10">
    <property type="entry name" value="YVTN repeat-like/Quinoprotein amine dehydrogenase"/>
    <property type="match status" value="1"/>
</dbReference>
<dbReference type="InterPro" id="IPR050339">
    <property type="entry name" value="CC_SR_Kinase"/>
</dbReference>
<dbReference type="InterPro" id="IPR011009">
    <property type="entry name" value="Kinase-like_dom_sf"/>
</dbReference>
<dbReference type="InterPro" id="IPR000719">
    <property type="entry name" value="Prot_kinase_dom"/>
</dbReference>
<dbReference type="InterPro" id="IPR011047">
    <property type="entry name" value="Quinoprotein_ADH-like_sf"/>
</dbReference>
<dbReference type="InterPro" id="IPR008271">
    <property type="entry name" value="Ser/Thr_kinase_AS"/>
</dbReference>
<dbReference type="InterPro" id="IPR015943">
    <property type="entry name" value="WD40/YVTN_repeat-like_dom_sf"/>
</dbReference>
<dbReference type="PANTHER" id="PTHR11042:SF166">
    <property type="entry name" value="EUKARYOTIC TRANSLATION INITIATION FACTOR 2-ALPHA KINASE 3"/>
    <property type="match status" value="1"/>
</dbReference>
<dbReference type="PANTHER" id="PTHR11042">
    <property type="entry name" value="EUKARYOTIC TRANSLATION INITIATION FACTOR 2-ALPHA KINASE EIF2-ALPHA KINASE -RELATED"/>
    <property type="match status" value="1"/>
</dbReference>
<dbReference type="Pfam" id="PF00069">
    <property type="entry name" value="Pkinase"/>
    <property type="match status" value="2"/>
</dbReference>
<dbReference type="SMART" id="SM00220">
    <property type="entry name" value="S_TKc"/>
    <property type="match status" value="1"/>
</dbReference>
<dbReference type="SUPFAM" id="SSF56112">
    <property type="entry name" value="Protein kinase-like (PK-like)"/>
    <property type="match status" value="1"/>
</dbReference>
<dbReference type="SUPFAM" id="SSF50998">
    <property type="entry name" value="Quinoprotein alcohol dehydrogenase-like"/>
    <property type="match status" value="1"/>
</dbReference>
<dbReference type="PROSITE" id="PS50011">
    <property type="entry name" value="PROTEIN_KINASE_DOM"/>
    <property type="match status" value="1"/>
</dbReference>
<dbReference type="PROSITE" id="PS00108">
    <property type="entry name" value="PROTEIN_KINASE_ST"/>
    <property type="match status" value="1"/>
</dbReference>
<reference key="1">
    <citation type="journal article" date="2009" name="Genome Biol.">
        <title>A whole-genome assembly of the domestic cow, Bos taurus.</title>
        <authorList>
            <person name="Zimin A.V."/>
            <person name="Delcher A.L."/>
            <person name="Florea L."/>
            <person name="Kelley D.R."/>
            <person name="Schatz M.C."/>
            <person name="Puiu D."/>
            <person name="Hanrahan F."/>
            <person name="Pertea G."/>
            <person name="Van Tassell C.P."/>
            <person name="Sonstegard T.S."/>
            <person name="Marcais G."/>
            <person name="Roberts M."/>
            <person name="Subramanian P."/>
            <person name="Yorke J.A."/>
            <person name="Salzberg S.L."/>
        </authorList>
    </citation>
    <scope>NUCLEOTIDE SEQUENCE [LARGE SCALE GENOMIC DNA]</scope>
    <source>
        <strain>Hereford</strain>
    </source>
</reference>
<reference evidence="9" key="2">
    <citation type="journal article" date="2018" name="J. Biol. Chem.">
        <title>The luminal domain of the ER stress sensor protein PERK binds misfolded proteins and thereby triggers PERK oligomerization.</title>
        <authorList>
            <person name="Wang P."/>
            <person name="Li J."/>
            <person name="Tao J."/>
            <person name="Sha B."/>
        </authorList>
    </citation>
    <scope>X-RAY CRYSTALLOGRAPHY (2.80 ANGSTROMS) OF 96-421</scope>
    <scope>FUNCTION</scope>
    <scope>SUBUNIT</scope>
    <scope>MUTAGENESIS OF TRP-165 AND 388-TYR--MET-391</scope>
</reference>
<keyword id="KW-0002">3D-structure</keyword>
<keyword id="KW-0013">ADP-ribosylation</keyword>
<keyword id="KW-0067">ATP-binding</keyword>
<keyword id="KW-0256">Endoplasmic reticulum</keyword>
<keyword id="KW-0325">Glycoprotein</keyword>
<keyword id="KW-0418">Kinase</keyword>
<keyword id="KW-0472">Membrane</keyword>
<keyword id="KW-0547">Nucleotide-binding</keyword>
<keyword id="KW-0597">Phosphoprotein</keyword>
<keyword id="KW-1185">Reference proteome</keyword>
<keyword id="KW-0723">Serine/threonine-protein kinase</keyword>
<keyword id="KW-0732">Signal</keyword>
<keyword id="KW-0346">Stress response</keyword>
<keyword id="KW-0808">Transferase</keyword>
<keyword id="KW-0810">Translation regulation</keyword>
<keyword id="KW-0812">Transmembrane</keyword>
<keyword id="KW-1133">Transmembrane helix</keyword>
<keyword id="KW-0829">Tyrosine-protein kinase</keyword>
<keyword id="KW-0834">Unfolded protein response</keyword>
<comment type="function">
    <text evidence="1 2 6">Metabolic-stress sensing protein kinase that phosphorylates the alpha subunit of eukaryotic translation initiation factor 2 (EIF2S1/eIF-2-alpha) in response to various stress, such as unfolded protein response (UPR) (By similarity). Key effector of the integrated stress response (ISR) to unfolded proteins: EIF2AK3/PERK specifically recognizes and binds misfolded proteins, leading to its activation and EIF2S1/eIF-2-alpha phosphorylation (PubMed:29386355). EIF2S1/eIF-2-alpha phosphorylation in response to stress converts EIF2S1/eIF-2-alpha in a global protein synthesis inhibitor, leading to a global attenuation of cap-dependent translation, while concomitantly initiating the preferential translation of ISR-specific mRNAs, such as the transcriptional activators ATF4 and QRICH1, and hence allowing ATF4- and QRICH1-mediated reprogramming (By similarity). The EIF2AK3/PERK-mediated unfolded protein response increases mitochondrial oxidative phosphorylation by promoting ATF4-mediated expression of COX7A2L/SCAF1, thereby increasing formation of respiratory chain supercomplexes (By similarity). In contrast to most subcellular compartments, mitochondria are protected from the EIF2AK3/PERK-mediated unfolded protein response due to EIF2AK3/PERK inhibition by ATAD3A at mitochondria-endoplasmic reticulum contact sites (By similarity). In addition to EIF2S1/eIF-2-alpha, also phosphorylates NFE2L2/NRF2 in response to stress, promoting release of NFE2L2/NRF2 from the BCR(KEAP1) complex, leading to nuclear accumulation and activation of NFE2L2/NRF2 (By similarity). Serves as a critical effector of unfolded protein response (UPR)-induced G1 growth arrest due to the loss of cyclin-D1 (CCND1) (By similarity). Involved in control of mitochondrial morphology and function (By similarity).</text>
</comment>
<comment type="catalytic activity">
    <reaction evidence="1">
        <text>L-seryl-[protein] + ATP = O-phospho-L-seryl-[protein] + ADP + H(+)</text>
        <dbReference type="Rhea" id="RHEA:17989"/>
        <dbReference type="Rhea" id="RHEA-COMP:9863"/>
        <dbReference type="Rhea" id="RHEA-COMP:11604"/>
        <dbReference type="ChEBI" id="CHEBI:15378"/>
        <dbReference type="ChEBI" id="CHEBI:29999"/>
        <dbReference type="ChEBI" id="CHEBI:30616"/>
        <dbReference type="ChEBI" id="CHEBI:83421"/>
        <dbReference type="ChEBI" id="CHEBI:456216"/>
        <dbReference type="EC" id="2.7.11.1"/>
    </reaction>
    <physiologicalReaction direction="left-to-right" evidence="1">
        <dbReference type="Rhea" id="RHEA:17990"/>
    </physiologicalReaction>
</comment>
<comment type="catalytic activity">
    <reaction evidence="1">
        <text>L-threonyl-[protein] + ATP = O-phospho-L-threonyl-[protein] + ADP + H(+)</text>
        <dbReference type="Rhea" id="RHEA:46608"/>
        <dbReference type="Rhea" id="RHEA-COMP:11060"/>
        <dbReference type="Rhea" id="RHEA-COMP:11605"/>
        <dbReference type="ChEBI" id="CHEBI:15378"/>
        <dbReference type="ChEBI" id="CHEBI:30013"/>
        <dbReference type="ChEBI" id="CHEBI:30616"/>
        <dbReference type="ChEBI" id="CHEBI:61977"/>
        <dbReference type="ChEBI" id="CHEBI:456216"/>
        <dbReference type="EC" id="2.7.11.1"/>
    </reaction>
    <physiologicalReaction direction="left-to-right" evidence="1">
        <dbReference type="Rhea" id="RHEA:46609"/>
    </physiologicalReaction>
</comment>
<comment type="catalytic activity">
    <reaction evidence="2">
        <text>L-tyrosyl-[protein] + ATP = O-phospho-L-tyrosyl-[protein] + ADP + H(+)</text>
        <dbReference type="Rhea" id="RHEA:10596"/>
        <dbReference type="Rhea" id="RHEA-COMP:10136"/>
        <dbReference type="Rhea" id="RHEA-COMP:20101"/>
        <dbReference type="ChEBI" id="CHEBI:15378"/>
        <dbReference type="ChEBI" id="CHEBI:30616"/>
        <dbReference type="ChEBI" id="CHEBI:46858"/>
        <dbReference type="ChEBI" id="CHEBI:61978"/>
        <dbReference type="ChEBI" id="CHEBI:456216"/>
        <dbReference type="EC" id="2.7.10.2"/>
    </reaction>
    <physiologicalReaction direction="left-to-right" evidence="2">
        <dbReference type="Rhea" id="RHEA:10597"/>
    </physiologicalReaction>
</comment>
<comment type="activity regulation">
    <text evidence="1 2">Inhibited by HSPA5/BIP in absence of stress (By similarity). Perturbation in protein folding in the endoplasmic reticulum (ER) promotes reversible dissociation from HSPA5/BIP and oligomerization, resulting in trans-autophosphorylation and kinase activity induction (By similarity). Inactivated following phosphorylation at Thr-802 by AKT (AKT1, AKT2 and/or AKT3) (By similarity). Inhibited by ATAD3A at mitochondria-endoplasmic reticulum contact sites, providing a safe haven for mitochondrial protein translation during ER stress (By similarity).</text>
</comment>
<comment type="subunit">
    <text evidence="1 2 6">Forms dimers with HSPA5/BIP in resting cells (By similarity). Homotetramerizes in response to endoplasmic reticulum (ER) stress, leading to its activation (PubMed:29386355). Interacts with HSP90B1/GRP94 (By similarity). Interacts with DNAJC3; inhibiting EIF2AK3/PERK activity (By similarity). Interacts with ATAD3A; ATAD3A and EIF2S1/eIF-2-alpha occupy a common binding site within the cytoplasmic loop of EIF2AK3/PERK, leading to prevent EIF2AK3/PERK association with its substrate EIF2S1/eIF-2-alpha (By similarity). Interacts with MFN2 (By similarity). Interacts with TMEM33 (By similarity). Interacts with PDIA6 (By similarity). Interacts with LACC1 (By similarity).</text>
</comment>
<comment type="subcellular location">
    <subcellularLocation>
        <location evidence="2">Endoplasmic reticulum membrane</location>
        <topology evidence="3">Single-pass type I membrane protein</topology>
    </subcellularLocation>
    <text evidence="1 2">Localizes to the Localizes to endoplasmic reticulum membrane (By similarity). Also present at mitochondria-endoplasmic reticulum contact sites; where it interacts with ATAD3A (By similarity).</text>
</comment>
<comment type="domain">
    <text evidence="2">The lumenal domain senses perturbations in protein folding in the ER, probably through reversible interaction with HSPA5/BIP.</text>
</comment>
<comment type="domain">
    <text evidence="2">The insert loop specifically recongnizes and binds EIF2S1/eIF-2-alpha.</text>
</comment>
<comment type="PTM">
    <text evidence="1 2">Oligomerization of the N-terminal ER luminal domain by ER stress promotes EIF2AK3/PERK trans-autophosphorylation of the C-terminal cytoplasmic kinase domain at multiple residues including Thr-981 on the kinase activation loop (By similarity). Autophosphorylated at Tyr-619 following endoplasmic reticulum stress, leading to activate its activity (By similarity). Dephosphorylated at Tyr-619 by PTPN1/PTP1B, leading to inactivate its enzyme activity (By similarity). Phosphorylation at Thr-802 by AKT (AKT1, AKT2 and/or AKT3) inactivates EIF2AK3/PERK (By similarity).</text>
</comment>
<comment type="PTM">
    <text evidence="1">ADP-ribosylated by PARP16 upon ER stress, which increases kinase activity.</text>
</comment>
<comment type="similarity">
    <text evidence="4">Belongs to the protein kinase superfamily. Ser/Thr protein kinase family. GCN2 subfamily.</text>
</comment>
<feature type="signal peptide" evidence="3">
    <location>
        <begin position="1"/>
        <end position="29"/>
    </location>
</feature>
<feature type="chain" id="PRO_5015086480" description="Eukaryotic translation initiation factor 2-alpha kinase 3" evidence="3">
    <location>
        <begin position="30"/>
        <end position="1115"/>
    </location>
</feature>
<feature type="topological domain" description="Extracellular" evidence="8">
    <location>
        <begin position="30"/>
        <end position="514"/>
    </location>
</feature>
<feature type="transmembrane region" description="Helical" evidence="3">
    <location>
        <begin position="515"/>
        <end position="535"/>
    </location>
</feature>
<feature type="topological domain" description="Cytoplasmic" evidence="8">
    <location>
        <begin position="536"/>
        <end position="1115"/>
    </location>
</feature>
<feature type="domain" description="Protein kinase" evidence="4">
    <location>
        <begin position="593"/>
        <end position="1076"/>
    </location>
</feature>
<feature type="region of interest" description="Disordered" evidence="5">
    <location>
        <begin position="74"/>
        <end position="101"/>
    </location>
</feature>
<feature type="region of interest" description="Insert loop" evidence="2">
    <location>
        <begin position="647"/>
        <end position="887"/>
    </location>
</feature>
<feature type="region of interest" description="Disordered" evidence="5">
    <location>
        <begin position="807"/>
        <end position="832"/>
    </location>
</feature>
<feature type="region of interest" description="Disordered" evidence="5">
    <location>
        <begin position="841"/>
        <end position="860"/>
    </location>
</feature>
<feature type="region of interest" description="Disordered" evidence="5">
    <location>
        <begin position="1087"/>
        <end position="1115"/>
    </location>
</feature>
<feature type="compositionally biased region" description="Polar residues" evidence="5">
    <location>
        <begin position="845"/>
        <end position="860"/>
    </location>
</feature>
<feature type="active site" description="Proton acceptor" evidence="4">
    <location>
        <position position="936"/>
    </location>
</feature>
<feature type="binding site" evidence="4">
    <location>
        <begin position="599"/>
        <end position="607"/>
    </location>
    <ligand>
        <name>ATP</name>
        <dbReference type="ChEBI" id="CHEBI:30616"/>
    </ligand>
</feature>
<feature type="binding site" evidence="4">
    <location>
        <position position="622"/>
    </location>
    <ligand>
        <name>ATP</name>
        <dbReference type="ChEBI" id="CHEBI:30616"/>
    </ligand>
</feature>
<feature type="modified residue" description="Phosphotyrosine; by autocatalysis" evidence="1">
    <location>
        <position position="619"/>
    </location>
</feature>
<feature type="modified residue" description="Phosphoserine" evidence="1">
    <location>
        <position position="715"/>
    </location>
</feature>
<feature type="modified residue" description="Phosphothreonine" evidence="2">
    <location>
        <position position="802"/>
    </location>
</feature>
<feature type="modified residue" description="Phosphothreonine" evidence="2">
    <location>
        <position position="981"/>
    </location>
</feature>
<feature type="modified residue" description="Phosphoserine" evidence="1">
    <location>
        <position position="1093"/>
    </location>
</feature>
<feature type="glycosylation site" description="N-linked (GlcNAc...) asparagine" evidence="3">
    <location>
        <position position="259"/>
    </location>
</feature>
<feature type="mutagenesis site" description="Decreased binding to misfolded proteins." evidence="6">
    <original>W</original>
    <variation>S</variation>
    <location>
        <position position="165"/>
    </location>
</feature>
<feature type="mutagenesis site" description="Decreased binding to misfolded proteins." evidence="6">
    <original>YLGM</original>
    <variation>SSGS</variation>
    <location>
        <begin position="388"/>
        <end position="391"/>
    </location>
</feature>
<feature type="strand" evidence="10">
    <location>
        <begin position="107"/>
        <end position="111"/>
    </location>
</feature>
<feature type="strand" evidence="10">
    <location>
        <begin position="114"/>
        <end position="120"/>
    </location>
</feature>
<feature type="turn" evidence="10">
    <location>
        <begin position="121"/>
        <end position="124"/>
    </location>
</feature>
<feature type="strand" evidence="10">
    <location>
        <begin position="125"/>
        <end position="132"/>
    </location>
</feature>
<feature type="strand" evidence="10">
    <location>
        <begin position="138"/>
        <end position="140"/>
    </location>
</feature>
<feature type="strand" evidence="10">
    <location>
        <begin position="155"/>
        <end position="157"/>
    </location>
</feature>
<feature type="strand" evidence="10">
    <location>
        <begin position="160"/>
        <end position="163"/>
    </location>
</feature>
<feature type="turn" evidence="10">
    <location>
        <begin position="167"/>
        <end position="170"/>
    </location>
</feature>
<feature type="strand" evidence="10">
    <location>
        <begin position="174"/>
        <end position="178"/>
    </location>
</feature>
<feature type="helix" evidence="10">
    <location>
        <begin position="179"/>
        <end position="183"/>
    </location>
</feature>
<feature type="strand" evidence="10">
    <location>
        <begin position="194"/>
        <end position="206"/>
    </location>
</feature>
<feature type="turn" evidence="10">
    <location>
        <begin position="208"/>
        <end position="210"/>
    </location>
</feature>
<feature type="strand" evidence="10">
    <location>
        <begin position="213"/>
        <end position="220"/>
    </location>
</feature>
<feature type="strand" evidence="10">
    <location>
        <begin position="222"/>
        <end position="224"/>
    </location>
</feature>
<feature type="strand" evidence="10">
    <location>
        <begin position="237"/>
        <end position="249"/>
    </location>
</feature>
<feature type="turn" evidence="10">
    <location>
        <begin position="251"/>
        <end position="253"/>
    </location>
</feature>
<feature type="strand" evidence="10">
    <location>
        <begin position="256"/>
        <end position="269"/>
    </location>
</feature>
<feature type="strand" evidence="10">
    <location>
        <begin position="310"/>
        <end position="314"/>
    </location>
</feature>
<feature type="turn" evidence="10">
    <location>
        <begin position="315"/>
        <end position="318"/>
    </location>
</feature>
<feature type="strand" evidence="10">
    <location>
        <begin position="319"/>
        <end position="323"/>
    </location>
</feature>
<feature type="turn" evidence="10">
    <location>
        <begin position="325"/>
        <end position="327"/>
    </location>
</feature>
<feature type="strand" evidence="10">
    <location>
        <begin position="330"/>
        <end position="335"/>
    </location>
</feature>
<feature type="strand" evidence="10">
    <location>
        <begin position="340"/>
        <end position="345"/>
    </location>
</feature>
<feature type="strand" evidence="10">
    <location>
        <begin position="377"/>
        <end position="380"/>
    </location>
</feature>
<feature type="strand" evidence="10">
    <location>
        <begin position="389"/>
        <end position="392"/>
    </location>
</feature>
<feature type="strand" evidence="10">
    <location>
        <begin position="395"/>
        <end position="398"/>
    </location>
</feature>
<feature type="strand" evidence="10">
    <location>
        <begin position="402"/>
        <end position="406"/>
    </location>
</feature>
<protein>
    <recommendedName>
        <fullName>Eukaryotic translation initiation factor 2-alpha kinase 3</fullName>
        <ecNumber evidence="1">2.7.11.1</ecNumber>
    </recommendedName>
    <alternativeName>
        <fullName evidence="7">PRKR-like endoplasmic reticulum kinase</fullName>
    </alternativeName>
    <alternativeName>
        <fullName evidence="8">Protein tyrosine kinase EIF2AK3</fullName>
        <ecNumber evidence="2">2.7.10.2</ecNumber>
    </alternativeName>
</protein>
<proteinExistence type="evidence at protein level"/>